<comment type="function">
    <text evidence="1">Calcium-dependent mitochondrial solute carrier. Mitochondrial solute carriers shuttle metabolites, nucleotides, and cofactors through the mitochondrial inner membrane (By similarity).</text>
</comment>
<comment type="subcellular location">
    <subcellularLocation>
        <location evidence="1">Mitochondrion inner membrane</location>
        <topology evidence="1">Multi-pass membrane protein</topology>
    </subcellularLocation>
</comment>
<comment type="similarity">
    <text evidence="3">Belongs to the mitochondrial carrier (TC 2.A.29) family.</text>
</comment>
<protein>
    <recommendedName>
        <fullName>Mitochondrial substrate carrier family protein D</fullName>
    </recommendedName>
</protein>
<feature type="chain" id="PRO_0000385520" description="Mitochondrial substrate carrier family protein D">
    <location>
        <begin position="1"/>
        <end position="344"/>
    </location>
</feature>
<feature type="topological domain" description="Mitochondrial intermembrane" evidence="1">
    <location>
        <begin position="1"/>
        <end position="22"/>
    </location>
</feature>
<feature type="transmembrane region" description="Helical; Name=1" evidence="2">
    <location>
        <begin position="23"/>
        <end position="43"/>
    </location>
</feature>
<feature type="topological domain" description="Mitochondrial matrix" evidence="1">
    <location>
        <begin position="44"/>
        <end position="75"/>
    </location>
</feature>
<feature type="transmembrane region" description="Helical; Name=2" evidence="2">
    <location>
        <begin position="76"/>
        <end position="96"/>
    </location>
</feature>
<feature type="topological domain" description="Mitochondrial intermembrane" evidence="1">
    <location>
        <begin position="97"/>
        <end position="116"/>
    </location>
</feature>
<feature type="transmembrane region" description="Helical; Name=3" evidence="2">
    <location>
        <begin position="117"/>
        <end position="137"/>
    </location>
</feature>
<feature type="topological domain" description="Mitochondrial matrix" evidence="1">
    <location>
        <begin position="138"/>
        <end position="186"/>
    </location>
</feature>
<feature type="transmembrane region" description="Helical; Name=4" evidence="2">
    <location>
        <begin position="187"/>
        <end position="207"/>
    </location>
</feature>
<feature type="topological domain" description="Mitochondrial intermembrane" evidence="1">
    <location>
        <begin position="208"/>
        <end position="238"/>
    </location>
</feature>
<feature type="transmembrane region" description="Helical; Name=5" evidence="2">
    <location>
        <begin position="239"/>
        <end position="259"/>
    </location>
</feature>
<feature type="topological domain" description="Mitochondrial matrix" evidence="1">
    <location>
        <begin position="260"/>
        <end position="301"/>
    </location>
</feature>
<feature type="transmembrane region" description="Helical; Name=6" evidence="2">
    <location>
        <begin position="302"/>
        <end position="321"/>
    </location>
</feature>
<feature type="topological domain" description="Mitochondrial intermembrane" evidence="1">
    <location>
        <begin position="322"/>
        <end position="344"/>
    </location>
</feature>
<feature type="repeat" description="Solcar 1">
    <location>
        <begin position="17"/>
        <end position="104"/>
    </location>
</feature>
<feature type="repeat" description="Solcar 2">
    <location>
        <begin position="119"/>
        <end position="212"/>
    </location>
</feature>
<feature type="repeat" description="Solcar 3">
    <location>
        <begin position="239"/>
        <end position="327"/>
    </location>
</feature>
<evidence type="ECO:0000250" key="1"/>
<evidence type="ECO:0000255" key="2"/>
<evidence type="ECO:0000305" key="3"/>
<reference key="1">
    <citation type="journal article" date="2005" name="Nature">
        <title>The genome of the social amoeba Dictyostelium discoideum.</title>
        <authorList>
            <person name="Eichinger L."/>
            <person name="Pachebat J.A."/>
            <person name="Gloeckner G."/>
            <person name="Rajandream M.A."/>
            <person name="Sucgang R."/>
            <person name="Berriman M."/>
            <person name="Song J."/>
            <person name="Olsen R."/>
            <person name="Szafranski K."/>
            <person name="Xu Q."/>
            <person name="Tunggal B."/>
            <person name="Kummerfeld S."/>
            <person name="Madera M."/>
            <person name="Konfortov B.A."/>
            <person name="Rivero F."/>
            <person name="Bankier A.T."/>
            <person name="Lehmann R."/>
            <person name="Hamlin N."/>
            <person name="Davies R."/>
            <person name="Gaudet P."/>
            <person name="Fey P."/>
            <person name="Pilcher K."/>
            <person name="Chen G."/>
            <person name="Saunders D."/>
            <person name="Sodergren E.J."/>
            <person name="Davis P."/>
            <person name="Kerhornou A."/>
            <person name="Nie X."/>
            <person name="Hall N."/>
            <person name="Anjard C."/>
            <person name="Hemphill L."/>
            <person name="Bason N."/>
            <person name="Farbrother P."/>
            <person name="Desany B."/>
            <person name="Just E."/>
            <person name="Morio T."/>
            <person name="Rost R."/>
            <person name="Churcher C.M."/>
            <person name="Cooper J."/>
            <person name="Haydock S."/>
            <person name="van Driessche N."/>
            <person name="Cronin A."/>
            <person name="Goodhead I."/>
            <person name="Muzny D.M."/>
            <person name="Mourier T."/>
            <person name="Pain A."/>
            <person name="Lu M."/>
            <person name="Harper D."/>
            <person name="Lindsay R."/>
            <person name="Hauser H."/>
            <person name="James K.D."/>
            <person name="Quiles M."/>
            <person name="Madan Babu M."/>
            <person name="Saito T."/>
            <person name="Buchrieser C."/>
            <person name="Wardroper A."/>
            <person name="Felder M."/>
            <person name="Thangavelu M."/>
            <person name="Johnson D."/>
            <person name="Knights A."/>
            <person name="Loulseged H."/>
            <person name="Mungall K.L."/>
            <person name="Oliver K."/>
            <person name="Price C."/>
            <person name="Quail M.A."/>
            <person name="Urushihara H."/>
            <person name="Hernandez J."/>
            <person name="Rabbinowitsch E."/>
            <person name="Steffen D."/>
            <person name="Sanders M."/>
            <person name="Ma J."/>
            <person name="Kohara Y."/>
            <person name="Sharp S."/>
            <person name="Simmonds M.N."/>
            <person name="Spiegler S."/>
            <person name="Tivey A."/>
            <person name="Sugano S."/>
            <person name="White B."/>
            <person name="Walker D."/>
            <person name="Woodward J.R."/>
            <person name="Winckler T."/>
            <person name="Tanaka Y."/>
            <person name="Shaulsky G."/>
            <person name="Schleicher M."/>
            <person name="Weinstock G.M."/>
            <person name="Rosenthal A."/>
            <person name="Cox E.C."/>
            <person name="Chisholm R.L."/>
            <person name="Gibbs R.A."/>
            <person name="Loomis W.F."/>
            <person name="Platzer M."/>
            <person name="Kay R.R."/>
            <person name="Williams J.G."/>
            <person name="Dear P.H."/>
            <person name="Noegel A.A."/>
            <person name="Barrell B.G."/>
            <person name="Kuspa A."/>
        </authorList>
    </citation>
    <scope>NUCLEOTIDE SEQUENCE [LARGE SCALE GENOMIC DNA]</scope>
    <source>
        <strain>AX4</strain>
    </source>
</reference>
<reference key="2">
    <citation type="journal article" date="2007" name="Biochimie">
        <title>Mitochondrial carrier family: repertoire and peculiarities of the cellular slime mould Dictyostelium discoideum.</title>
        <authorList>
            <person name="Satre M."/>
            <person name="Mattei S."/>
            <person name="Aubry L."/>
            <person name="Gaudet P."/>
            <person name="Pelosi L."/>
            <person name="Brandolin G."/>
            <person name="Klein G."/>
        </authorList>
    </citation>
    <scope>REVIEW</scope>
</reference>
<proteinExistence type="inferred from homology"/>
<name>MCFD_DICDI</name>
<sequence>MDSTKTNNKWAAAGILNSVGKDFVAGSVGGMSSIMAGHPFDTIKVMLQDASGNLPKFKNGFQALKYIMKVDGIKGIYRGLSVPLFSVSFTNSVFFATNNFCQSYFHPPCKDENGEDILIPYHKAAAAGAIAGGVISLLITPRDLVKSKLQVQCRPFGSTNVSLQYKGPIDVIRQTIKRDGIKGMFKGIRSTFCRDIPGDAVYFVVYEFMKRKLLALSKNNNNNNNNNDNNDNSSPKAGVPAWVAIGAGGCAGMSFWMSIYPMDVVKTRIQTQPDHLPPQYTSVLQTITKIYREEGISVFFRGFSATILRAFPTSAVNFLMYETTRNLLNSKDPFYNNNDHYNAE</sequence>
<keyword id="KW-0472">Membrane</keyword>
<keyword id="KW-0496">Mitochondrion</keyword>
<keyword id="KW-0999">Mitochondrion inner membrane</keyword>
<keyword id="KW-1185">Reference proteome</keyword>
<keyword id="KW-0677">Repeat</keyword>
<keyword id="KW-0812">Transmembrane</keyword>
<keyword id="KW-1133">Transmembrane helix</keyword>
<keyword id="KW-0813">Transport</keyword>
<gene>
    <name type="primary">mcfD</name>
    <name type="ORF">DDB_G0269352</name>
</gene>
<dbReference type="EMBL" id="AAFI02000005">
    <property type="protein sequence ID" value="EAL72026.1"/>
    <property type="molecule type" value="Genomic_DNA"/>
</dbReference>
<dbReference type="RefSeq" id="XP_645896.1">
    <property type="nucleotide sequence ID" value="XM_640804.1"/>
</dbReference>
<dbReference type="SMR" id="Q55E85"/>
<dbReference type="STRING" id="44689.Q55E85"/>
<dbReference type="PaxDb" id="44689-DDB0237604"/>
<dbReference type="EnsemblProtists" id="EAL72026">
    <property type="protein sequence ID" value="EAL72026"/>
    <property type="gene ID" value="DDB_G0269352"/>
</dbReference>
<dbReference type="GeneID" id="8616838"/>
<dbReference type="KEGG" id="ddi:DDB_G0269352"/>
<dbReference type="dictyBase" id="DDB_G0269352">
    <property type="gene designation" value="mcfD"/>
</dbReference>
<dbReference type="VEuPathDB" id="AmoebaDB:DDB_G0269352"/>
<dbReference type="eggNOG" id="KOG0758">
    <property type="taxonomic scope" value="Eukaryota"/>
</dbReference>
<dbReference type="HOGENOM" id="CLU_015166_16_1_1"/>
<dbReference type="InParanoid" id="Q55E85"/>
<dbReference type="OMA" id="CAGMSFW"/>
<dbReference type="PhylomeDB" id="Q55E85"/>
<dbReference type="Reactome" id="R-DDI-70635">
    <property type="pathway name" value="Urea cycle"/>
</dbReference>
<dbReference type="PRO" id="PR:Q55E85"/>
<dbReference type="Proteomes" id="UP000002195">
    <property type="component" value="Chromosome 1"/>
</dbReference>
<dbReference type="GO" id="GO:0005743">
    <property type="term" value="C:mitochondrial inner membrane"/>
    <property type="evidence" value="ECO:0007669"/>
    <property type="project" value="UniProtKB-SubCell"/>
</dbReference>
<dbReference type="GO" id="GO:0005739">
    <property type="term" value="C:mitochondrion"/>
    <property type="evidence" value="ECO:0000318"/>
    <property type="project" value="GO_Central"/>
</dbReference>
<dbReference type="GO" id="GO:0000064">
    <property type="term" value="F:L-ornithine transmembrane transporter activity"/>
    <property type="evidence" value="ECO:0000318"/>
    <property type="project" value="GO_Central"/>
</dbReference>
<dbReference type="GO" id="GO:1990575">
    <property type="term" value="P:mitochondrial L-ornithine transmembrane transport"/>
    <property type="evidence" value="ECO:0000318"/>
    <property type="project" value="GO_Central"/>
</dbReference>
<dbReference type="Gene3D" id="1.50.40.10">
    <property type="entry name" value="Mitochondrial carrier domain"/>
    <property type="match status" value="1"/>
</dbReference>
<dbReference type="InterPro" id="IPR002067">
    <property type="entry name" value="Mit_carrier"/>
</dbReference>
<dbReference type="InterPro" id="IPR050567">
    <property type="entry name" value="Mitochondrial_Carrier"/>
</dbReference>
<dbReference type="InterPro" id="IPR018108">
    <property type="entry name" value="Mitochondrial_sb/sol_carrier"/>
</dbReference>
<dbReference type="InterPro" id="IPR023395">
    <property type="entry name" value="Mt_carrier_dom_sf"/>
</dbReference>
<dbReference type="PANTHER" id="PTHR45624">
    <property type="entry name" value="MITOCHONDRIAL BASIC AMINO ACIDS TRANSPORTER-RELATED"/>
    <property type="match status" value="1"/>
</dbReference>
<dbReference type="PANTHER" id="PTHR45624:SF18">
    <property type="entry name" value="MITOCHONDRIAL SUBSTRATE CARRIER FAMILY PROTEIN D"/>
    <property type="match status" value="1"/>
</dbReference>
<dbReference type="Pfam" id="PF00153">
    <property type="entry name" value="Mito_carr"/>
    <property type="match status" value="3"/>
</dbReference>
<dbReference type="PRINTS" id="PR00926">
    <property type="entry name" value="MITOCARRIER"/>
</dbReference>
<dbReference type="SUPFAM" id="SSF103506">
    <property type="entry name" value="Mitochondrial carrier"/>
    <property type="match status" value="1"/>
</dbReference>
<dbReference type="PROSITE" id="PS50920">
    <property type="entry name" value="SOLCAR"/>
    <property type="match status" value="3"/>
</dbReference>
<accession>Q55E85</accession>
<organism>
    <name type="scientific">Dictyostelium discoideum</name>
    <name type="common">Social amoeba</name>
    <dbReference type="NCBI Taxonomy" id="44689"/>
    <lineage>
        <taxon>Eukaryota</taxon>
        <taxon>Amoebozoa</taxon>
        <taxon>Evosea</taxon>
        <taxon>Eumycetozoa</taxon>
        <taxon>Dictyostelia</taxon>
        <taxon>Dictyosteliales</taxon>
        <taxon>Dictyosteliaceae</taxon>
        <taxon>Dictyostelium</taxon>
    </lineage>
</organism>